<reference key="1">
    <citation type="journal article" date="1999" name="Dev. Biol.">
        <title>Three different noggin genes antagonize the activity of bone morphogenetic proteins in the zebrafish embryo.</title>
        <authorList>
            <person name="Fuerthauer M."/>
            <person name="Thisse B."/>
            <person name="Thisse C."/>
        </authorList>
    </citation>
    <scope>NUCLEOTIDE SEQUENCE [MRNA]</scope>
</reference>
<proteinExistence type="evidence at transcript level"/>
<dbReference type="EMBL" id="AF159147">
    <property type="protein sequence ID" value="AAD43132.1"/>
    <property type="molecule type" value="mRNA"/>
</dbReference>
<dbReference type="SMR" id="Q9W741"/>
<dbReference type="FunCoup" id="Q9W741">
    <property type="interactions" value="22"/>
</dbReference>
<dbReference type="STRING" id="7955.ENSDARP00000076205"/>
<dbReference type="GlyCosmos" id="Q9W741">
    <property type="glycosylation" value="1 site, No reported glycans"/>
</dbReference>
<dbReference type="PaxDb" id="7955-ENSDARP00000076205"/>
<dbReference type="AGR" id="ZFIN:ZDB-GENE-991206-8"/>
<dbReference type="ZFIN" id="ZDB-GENE-991206-8">
    <property type="gene designation" value="nog1"/>
</dbReference>
<dbReference type="eggNOG" id="KOG4485">
    <property type="taxonomic scope" value="Eukaryota"/>
</dbReference>
<dbReference type="InParanoid" id="Q9W741"/>
<dbReference type="PhylomeDB" id="Q9W741"/>
<dbReference type="PRO" id="PR:Q9W741"/>
<dbReference type="Proteomes" id="UP000000437">
    <property type="component" value="Unplaced"/>
</dbReference>
<dbReference type="GO" id="GO:0005615">
    <property type="term" value="C:extracellular space"/>
    <property type="evidence" value="ECO:0000318"/>
    <property type="project" value="GO_Central"/>
</dbReference>
<dbReference type="GO" id="GO:0005794">
    <property type="term" value="C:Golgi apparatus"/>
    <property type="evidence" value="ECO:0000314"/>
    <property type="project" value="ZFIN"/>
</dbReference>
<dbReference type="GO" id="GO:0045202">
    <property type="term" value="C:synapse"/>
    <property type="evidence" value="ECO:0000314"/>
    <property type="project" value="ZFIN"/>
</dbReference>
<dbReference type="GO" id="GO:0051216">
    <property type="term" value="P:cartilage development"/>
    <property type="evidence" value="ECO:0007669"/>
    <property type="project" value="UniProtKB-KW"/>
</dbReference>
<dbReference type="GO" id="GO:0009953">
    <property type="term" value="P:dorsal/ventral pattern formation"/>
    <property type="evidence" value="ECO:0000315"/>
    <property type="project" value="ZFIN"/>
</dbReference>
<dbReference type="GO" id="GO:0030514">
    <property type="term" value="P:negative regulation of BMP signaling pathway"/>
    <property type="evidence" value="ECO:0000315"/>
    <property type="project" value="ZFIN"/>
</dbReference>
<dbReference type="GO" id="GO:0042664">
    <property type="term" value="P:negative regulation of endodermal cell fate specification"/>
    <property type="evidence" value="ECO:0000316"/>
    <property type="project" value="ZFIN"/>
</dbReference>
<dbReference type="GO" id="GO:0001649">
    <property type="term" value="P:osteoblast differentiation"/>
    <property type="evidence" value="ECO:0000318"/>
    <property type="project" value="GO_Central"/>
</dbReference>
<dbReference type="Gene3D" id="2.10.90.10">
    <property type="entry name" value="Cystine-knot cytokines"/>
    <property type="match status" value="1"/>
</dbReference>
<dbReference type="Gene3D" id="1.10.287.520">
    <property type="entry name" value="Helix hairpin bin"/>
    <property type="match status" value="1"/>
</dbReference>
<dbReference type="InterPro" id="IPR029034">
    <property type="entry name" value="Cystine-knot_cytokine"/>
</dbReference>
<dbReference type="InterPro" id="IPR008717">
    <property type="entry name" value="Noggin"/>
</dbReference>
<dbReference type="PANTHER" id="PTHR10494">
    <property type="entry name" value="BONE MORPHOGENETIC PROTEIN INHIBITOR, NOGGIN"/>
    <property type="match status" value="1"/>
</dbReference>
<dbReference type="PANTHER" id="PTHR10494:SF5">
    <property type="entry name" value="NOGGIN"/>
    <property type="match status" value="1"/>
</dbReference>
<dbReference type="Pfam" id="PF05806">
    <property type="entry name" value="Noggin"/>
    <property type="match status" value="1"/>
</dbReference>
<dbReference type="PIRSF" id="PIRSF008129">
    <property type="entry name" value="Noggin"/>
    <property type="match status" value="1"/>
</dbReference>
<dbReference type="SUPFAM" id="SSF57501">
    <property type="entry name" value="Cystine-knot cytokines"/>
    <property type="match status" value="1"/>
</dbReference>
<accession>Q9W741</accession>
<protein>
    <recommendedName>
        <fullName>Noggin-1</fullName>
    </recommendedName>
</protein>
<keyword id="KW-0891">Chondrogenesis</keyword>
<keyword id="KW-0217">Developmental protein</keyword>
<keyword id="KW-0221">Differentiation</keyword>
<keyword id="KW-1015">Disulfide bond</keyword>
<keyword id="KW-0325">Glycoprotein</keyword>
<keyword id="KW-1185">Reference proteome</keyword>
<keyword id="KW-0964">Secreted</keyword>
<keyword id="KW-0732">Signal</keyword>
<comment type="function">
    <text>Inhibitor of bone morphogenetic proteins (BMP) signaling. May play an important role in the dorsoventral patterning of the embryo.</text>
</comment>
<comment type="subunit">
    <text evidence="1">Homodimer; disulfide-linked.</text>
</comment>
<comment type="subcellular location">
    <subcellularLocation>
        <location>Secreted</location>
    </subcellularLocation>
</comment>
<comment type="developmental stage">
    <text>Detected following the activation of the zygotic genome in a few deep cells of the marginal region of the blastoderm. From the 5-12 somite stage, expression is observed in the dorsal telencephalon and in posterior and ventral parts of the eye field. By the 12-somite stage detected all along the dorsal neural tube from the level of the diencephalon to the caudal spinal cord and this expression persists until 24 hours of development. At the 15-somite stage expression is seen in the midline around the tail bud. Between 15 and 20 hours development dorsal as well as ventral expression is observed in recently formed somites while in more mature somites, detected only ventrally. By 24 hours development expression is limited to the ventral sclerotomal aspect of the caudal somites. Later in development detected in very restricted parts of the CNS.</text>
</comment>
<comment type="similarity">
    <text evidence="3">Belongs to the noggin family.</text>
</comment>
<name>NOGG1_DANRE</name>
<sequence length="216" mass="25093">MDFPRFLLSAYLLLLSFAQCQHYYLLRPIPSDTLPLLELKEDPDPIYDPREKDLNETELRSALGDFDSRFLSVGPPQDRYAGNEDLDEQELQLNLAGMMPKDIKNLDFDAPWGKKRKASKKLKRRLQMWLWSYSFCPVLYAWNDLGSRFWPRFVRAGSCYTKRSCSVPEGMVCKPAKSTHITLLRWRCVARRGALKCAWIPVQYPIITECKCSCAN</sequence>
<gene>
    <name type="primary">nog1</name>
</gene>
<feature type="signal peptide" evidence="2">
    <location>
        <begin position="1"/>
        <end position="18"/>
    </location>
</feature>
<feature type="chain" id="PRO_0000019817" description="Noggin-1">
    <location>
        <begin position="19"/>
        <end position="216"/>
    </location>
</feature>
<feature type="glycosylation site" description="N-linked (GlcNAc...) asparagine" evidence="2">
    <location>
        <position position="55"/>
    </location>
</feature>
<evidence type="ECO:0000250" key="1"/>
<evidence type="ECO:0000255" key="2"/>
<evidence type="ECO:0000305" key="3"/>
<organism>
    <name type="scientific">Danio rerio</name>
    <name type="common">Zebrafish</name>
    <name type="synonym">Brachydanio rerio</name>
    <dbReference type="NCBI Taxonomy" id="7955"/>
    <lineage>
        <taxon>Eukaryota</taxon>
        <taxon>Metazoa</taxon>
        <taxon>Chordata</taxon>
        <taxon>Craniata</taxon>
        <taxon>Vertebrata</taxon>
        <taxon>Euteleostomi</taxon>
        <taxon>Actinopterygii</taxon>
        <taxon>Neopterygii</taxon>
        <taxon>Teleostei</taxon>
        <taxon>Ostariophysi</taxon>
        <taxon>Cypriniformes</taxon>
        <taxon>Danionidae</taxon>
        <taxon>Danioninae</taxon>
        <taxon>Danio</taxon>
    </lineage>
</organism>